<comment type="function">
    <text evidence="1">Catalyzes the base-exchange of a guanine (G) residue with the queuine precursor 7-aminomethyl-7-deazaguanine (PreQ1) at position 34 (anticodon wobble position) in tRNAs with GU(N) anticodons (tRNA-Asp, -Asn, -His and -Tyr). Catalysis occurs through a double-displacement mechanism. The nucleophile active site attacks the C1' of nucleotide 34 to detach the guanine base from the RNA, forming a covalent enzyme-RNA intermediate. The proton acceptor active site deprotonates the incoming PreQ1, allowing a nucleophilic attack on the C1' of the ribose to form the product. After dissociation, two additional enzymatic reactions on the tRNA convert PreQ1 to queuine (Q), resulting in the hypermodified nucleoside queuosine (7-(((4,5-cis-dihydroxy-2-cyclopenten-1-yl)amino)methyl)-7-deazaguanosine).</text>
</comment>
<comment type="catalytic activity">
    <reaction evidence="1">
        <text>7-aminomethyl-7-carbaguanine + guanosine(34) in tRNA = 7-aminomethyl-7-carbaguanosine(34) in tRNA + guanine</text>
        <dbReference type="Rhea" id="RHEA:24104"/>
        <dbReference type="Rhea" id="RHEA-COMP:10341"/>
        <dbReference type="Rhea" id="RHEA-COMP:10342"/>
        <dbReference type="ChEBI" id="CHEBI:16235"/>
        <dbReference type="ChEBI" id="CHEBI:58703"/>
        <dbReference type="ChEBI" id="CHEBI:74269"/>
        <dbReference type="ChEBI" id="CHEBI:82833"/>
        <dbReference type="EC" id="2.4.2.29"/>
    </reaction>
</comment>
<comment type="cofactor">
    <cofactor evidence="1">
        <name>Zn(2+)</name>
        <dbReference type="ChEBI" id="CHEBI:29105"/>
    </cofactor>
    <text evidence="1">Binds 1 zinc ion per subunit.</text>
</comment>
<comment type="pathway">
    <text evidence="1">tRNA modification; tRNA-queuosine biosynthesis.</text>
</comment>
<comment type="subunit">
    <text evidence="1">Homodimer. Within each dimer, one monomer is responsible for RNA recognition and catalysis, while the other monomer binds to the replacement base PreQ1.</text>
</comment>
<comment type="similarity">
    <text evidence="1">Belongs to the queuine tRNA-ribosyltransferase family.</text>
</comment>
<dbReference type="EC" id="2.4.2.29" evidence="1"/>
<dbReference type="EMBL" id="CP000813">
    <property type="protein sequence ID" value="ABV63076.1"/>
    <property type="molecule type" value="Genomic_DNA"/>
</dbReference>
<dbReference type="RefSeq" id="WP_012010739.1">
    <property type="nucleotide sequence ID" value="NZ_VEIS01000010.1"/>
</dbReference>
<dbReference type="SMR" id="A8FFQ9"/>
<dbReference type="STRING" id="315750.BPUM_2412"/>
<dbReference type="GeneID" id="5621676"/>
<dbReference type="KEGG" id="bpu:BPUM_2412"/>
<dbReference type="eggNOG" id="COG0343">
    <property type="taxonomic scope" value="Bacteria"/>
</dbReference>
<dbReference type="HOGENOM" id="CLU_022060_0_1_9"/>
<dbReference type="OrthoDB" id="9805417at2"/>
<dbReference type="UniPathway" id="UPA00392"/>
<dbReference type="Proteomes" id="UP000001355">
    <property type="component" value="Chromosome"/>
</dbReference>
<dbReference type="GO" id="GO:0005829">
    <property type="term" value="C:cytosol"/>
    <property type="evidence" value="ECO:0007669"/>
    <property type="project" value="TreeGrafter"/>
</dbReference>
<dbReference type="GO" id="GO:0046872">
    <property type="term" value="F:metal ion binding"/>
    <property type="evidence" value="ECO:0007669"/>
    <property type="project" value="UniProtKB-KW"/>
</dbReference>
<dbReference type="GO" id="GO:0008479">
    <property type="term" value="F:tRNA-guanosine(34) queuine transglycosylase activity"/>
    <property type="evidence" value="ECO:0007669"/>
    <property type="project" value="UniProtKB-UniRule"/>
</dbReference>
<dbReference type="GO" id="GO:0008616">
    <property type="term" value="P:queuosine biosynthetic process"/>
    <property type="evidence" value="ECO:0007669"/>
    <property type="project" value="UniProtKB-UniRule"/>
</dbReference>
<dbReference type="GO" id="GO:0002099">
    <property type="term" value="P:tRNA wobble guanine modification"/>
    <property type="evidence" value="ECO:0007669"/>
    <property type="project" value="TreeGrafter"/>
</dbReference>
<dbReference type="GO" id="GO:0101030">
    <property type="term" value="P:tRNA-guanine transglycosylation"/>
    <property type="evidence" value="ECO:0007669"/>
    <property type="project" value="InterPro"/>
</dbReference>
<dbReference type="FunFam" id="3.20.20.105:FF:000001">
    <property type="entry name" value="Queuine tRNA-ribosyltransferase"/>
    <property type="match status" value="1"/>
</dbReference>
<dbReference type="Gene3D" id="3.20.20.105">
    <property type="entry name" value="Queuine tRNA-ribosyltransferase-like"/>
    <property type="match status" value="1"/>
</dbReference>
<dbReference type="HAMAP" id="MF_00168">
    <property type="entry name" value="Q_tRNA_Tgt"/>
    <property type="match status" value="1"/>
</dbReference>
<dbReference type="InterPro" id="IPR050076">
    <property type="entry name" value="ArchSynthase1/Queuine_TRR"/>
</dbReference>
<dbReference type="InterPro" id="IPR004803">
    <property type="entry name" value="TGT"/>
</dbReference>
<dbReference type="InterPro" id="IPR036511">
    <property type="entry name" value="TGT-like_sf"/>
</dbReference>
<dbReference type="InterPro" id="IPR002616">
    <property type="entry name" value="tRNA_ribo_trans-like"/>
</dbReference>
<dbReference type="NCBIfam" id="TIGR00430">
    <property type="entry name" value="Q_tRNA_tgt"/>
    <property type="match status" value="1"/>
</dbReference>
<dbReference type="NCBIfam" id="TIGR00449">
    <property type="entry name" value="tgt_general"/>
    <property type="match status" value="1"/>
</dbReference>
<dbReference type="PANTHER" id="PTHR46499">
    <property type="entry name" value="QUEUINE TRNA-RIBOSYLTRANSFERASE"/>
    <property type="match status" value="1"/>
</dbReference>
<dbReference type="PANTHER" id="PTHR46499:SF1">
    <property type="entry name" value="QUEUINE TRNA-RIBOSYLTRANSFERASE"/>
    <property type="match status" value="1"/>
</dbReference>
<dbReference type="Pfam" id="PF01702">
    <property type="entry name" value="TGT"/>
    <property type="match status" value="1"/>
</dbReference>
<dbReference type="SUPFAM" id="SSF51713">
    <property type="entry name" value="tRNA-guanine transglycosylase"/>
    <property type="match status" value="1"/>
</dbReference>
<keyword id="KW-0328">Glycosyltransferase</keyword>
<keyword id="KW-0479">Metal-binding</keyword>
<keyword id="KW-0671">Queuosine biosynthesis</keyword>
<keyword id="KW-0808">Transferase</keyword>
<keyword id="KW-0819">tRNA processing</keyword>
<keyword id="KW-0862">Zinc</keyword>
<reference key="1">
    <citation type="journal article" date="2007" name="PLoS ONE">
        <title>Paradoxical DNA repair and peroxide resistance gene conservation in Bacillus pumilus SAFR-032.</title>
        <authorList>
            <person name="Gioia J."/>
            <person name="Yerrapragada S."/>
            <person name="Qin X."/>
            <person name="Jiang H."/>
            <person name="Igboeli O.C."/>
            <person name="Muzny D."/>
            <person name="Dugan-Rocha S."/>
            <person name="Ding Y."/>
            <person name="Hawes A."/>
            <person name="Liu W."/>
            <person name="Perez L."/>
            <person name="Kovar C."/>
            <person name="Dinh H."/>
            <person name="Lee S."/>
            <person name="Nazareth L."/>
            <person name="Blyth P."/>
            <person name="Holder M."/>
            <person name="Buhay C."/>
            <person name="Tirumalai M.R."/>
            <person name="Liu Y."/>
            <person name="Dasgupta I."/>
            <person name="Bokhetache L."/>
            <person name="Fujita M."/>
            <person name="Karouia F."/>
            <person name="Eswara Moorthy P."/>
            <person name="Siefert J."/>
            <person name="Uzman A."/>
            <person name="Buzumbo P."/>
            <person name="Verma A."/>
            <person name="Zwiya H."/>
            <person name="McWilliams B.D."/>
            <person name="Olowu A."/>
            <person name="Clinkenbeard K.D."/>
            <person name="Newcombe D."/>
            <person name="Golebiewski L."/>
            <person name="Petrosino J.F."/>
            <person name="Nicholson W.L."/>
            <person name="Fox G.E."/>
            <person name="Venkateswaran K."/>
            <person name="Highlander S.K."/>
            <person name="Weinstock G.M."/>
        </authorList>
    </citation>
    <scope>NUCLEOTIDE SEQUENCE [LARGE SCALE GENOMIC DNA]</scope>
    <source>
        <strain>SAFR-032</strain>
    </source>
</reference>
<proteinExistence type="inferred from homology"/>
<organism>
    <name type="scientific">Bacillus pumilus (strain SAFR-032)</name>
    <dbReference type="NCBI Taxonomy" id="315750"/>
    <lineage>
        <taxon>Bacteria</taxon>
        <taxon>Bacillati</taxon>
        <taxon>Bacillota</taxon>
        <taxon>Bacilli</taxon>
        <taxon>Bacillales</taxon>
        <taxon>Bacillaceae</taxon>
        <taxon>Bacillus</taxon>
    </lineage>
</organism>
<sequence>MSQLPIRYEFIKSCKQTGARLGRVHTPHGSFDTPVFMPVGTLATVKTMAPEELKAMEAGIILSNTYHLWLRPGHDIVKEAGGLHKFMNWDRAILTDSGGFQVFSLSEFRKIEEEGVHFRNHLNGDKLFLSPEKAMDIQNALGSDIMMAFDECPPYPAEYDYMKRSVERTSRWAERCLTAHQRPEDQGLFGIIQGGEYEELRKQSAKDLVSLDFPGYAIGGLSVGEPKDVMNRVLEFTTPLLPADKPRYLMGVGSPDSLIDGAIRGVDMFDCVLPTRIARNGTLMTSEGRLVVKNAKYERDFRPIDENCDCYTCKNYTRAYIRHLIKTNETFGIRLTTYHNLHFLLKLMEQVREAIREDRLGDFKEEFFERYGFNEPNAKNF</sequence>
<feature type="chain" id="PRO_1000058277" description="Queuine tRNA-ribosyltransferase">
    <location>
        <begin position="1"/>
        <end position="381"/>
    </location>
</feature>
<feature type="region of interest" description="RNA binding" evidence="1">
    <location>
        <begin position="251"/>
        <end position="257"/>
    </location>
</feature>
<feature type="region of interest" description="RNA binding; important for wobble base 34 recognition" evidence="1">
    <location>
        <begin position="275"/>
        <end position="279"/>
    </location>
</feature>
<feature type="active site" description="Proton acceptor" evidence="1">
    <location>
        <position position="96"/>
    </location>
</feature>
<feature type="active site" description="Nucleophile" evidence="1">
    <location>
        <position position="270"/>
    </location>
</feature>
<feature type="binding site" evidence="1">
    <location>
        <begin position="96"/>
        <end position="100"/>
    </location>
    <ligand>
        <name>substrate</name>
    </ligand>
</feature>
<feature type="binding site" evidence="1">
    <location>
        <position position="150"/>
    </location>
    <ligand>
        <name>substrate</name>
    </ligand>
</feature>
<feature type="binding site" evidence="1">
    <location>
        <position position="193"/>
    </location>
    <ligand>
        <name>substrate</name>
    </ligand>
</feature>
<feature type="binding site" evidence="1">
    <location>
        <position position="220"/>
    </location>
    <ligand>
        <name>substrate</name>
    </ligand>
</feature>
<feature type="binding site" evidence="1">
    <location>
        <position position="308"/>
    </location>
    <ligand>
        <name>Zn(2+)</name>
        <dbReference type="ChEBI" id="CHEBI:29105"/>
    </ligand>
</feature>
<feature type="binding site" evidence="1">
    <location>
        <position position="310"/>
    </location>
    <ligand>
        <name>Zn(2+)</name>
        <dbReference type="ChEBI" id="CHEBI:29105"/>
    </ligand>
</feature>
<feature type="binding site" evidence="1">
    <location>
        <position position="313"/>
    </location>
    <ligand>
        <name>Zn(2+)</name>
        <dbReference type="ChEBI" id="CHEBI:29105"/>
    </ligand>
</feature>
<feature type="binding site" evidence="1">
    <location>
        <position position="339"/>
    </location>
    <ligand>
        <name>Zn(2+)</name>
        <dbReference type="ChEBI" id="CHEBI:29105"/>
    </ligand>
</feature>
<name>TGT_BACP2</name>
<evidence type="ECO:0000255" key="1">
    <source>
        <dbReference type="HAMAP-Rule" id="MF_00168"/>
    </source>
</evidence>
<accession>A8FFQ9</accession>
<protein>
    <recommendedName>
        <fullName evidence="1">Queuine tRNA-ribosyltransferase</fullName>
        <ecNumber evidence="1">2.4.2.29</ecNumber>
    </recommendedName>
    <alternativeName>
        <fullName evidence="1">Guanine insertion enzyme</fullName>
    </alternativeName>
    <alternativeName>
        <fullName evidence="1">tRNA-guanine transglycosylase</fullName>
    </alternativeName>
</protein>
<gene>
    <name evidence="1" type="primary">tgt</name>
    <name type="ordered locus">BPUM_2412</name>
</gene>